<accession>A5F9G8</accession>
<accession>C3M4Q7</accession>
<gene>
    <name type="ordered locus">VC0395_A0018</name>
    <name type="ordered locus">VC395_0510</name>
</gene>
<proteinExistence type="inferred from homology"/>
<protein>
    <recommendedName>
        <fullName evidence="1">Putative pre-16S rRNA nuclease</fullName>
        <ecNumber evidence="1">3.1.-.-</ecNumber>
    </recommendedName>
</protein>
<feature type="chain" id="PRO_1000072694" description="Putative pre-16S rRNA nuclease">
    <location>
        <begin position="1"/>
        <end position="140"/>
    </location>
</feature>
<organism>
    <name type="scientific">Vibrio cholerae serotype O1 (strain ATCC 39541 / Classical Ogawa 395 / O395)</name>
    <dbReference type="NCBI Taxonomy" id="345073"/>
    <lineage>
        <taxon>Bacteria</taxon>
        <taxon>Pseudomonadati</taxon>
        <taxon>Pseudomonadota</taxon>
        <taxon>Gammaproteobacteria</taxon>
        <taxon>Vibrionales</taxon>
        <taxon>Vibrionaceae</taxon>
        <taxon>Vibrio</taxon>
    </lineage>
</organism>
<dbReference type="EC" id="3.1.-.-" evidence="1"/>
<dbReference type="EMBL" id="CP000627">
    <property type="protein sequence ID" value="ABQ20547.1"/>
    <property type="molecule type" value="Genomic_DNA"/>
</dbReference>
<dbReference type="EMBL" id="CP001235">
    <property type="protein sequence ID" value="ACP08529.1"/>
    <property type="molecule type" value="Genomic_DNA"/>
</dbReference>
<dbReference type="SMR" id="A5F9G8"/>
<dbReference type="KEGG" id="vco:VC0395_A0018"/>
<dbReference type="KEGG" id="vcr:VC395_0510"/>
<dbReference type="PATRIC" id="fig|345073.21.peg.497"/>
<dbReference type="eggNOG" id="COG0816">
    <property type="taxonomic scope" value="Bacteria"/>
</dbReference>
<dbReference type="HOGENOM" id="CLU_098240_3_0_6"/>
<dbReference type="OrthoDB" id="9796140at2"/>
<dbReference type="Proteomes" id="UP000000249">
    <property type="component" value="Chromosome 2"/>
</dbReference>
<dbReference type="GO" id="GO:0005829">
    <property type="term" value="C:cytosol"/>
    <property type="evidence" value="ECO:0007669"/>
    <property type="project" value="TreeGrafter"/>
</dbReference>
<dbReference type="GO" id="GO:0004518">
    <property type="term" value="F:nuclease activity"/>
    <property type="evidence" value="ECO:0007669"/>
    <property type="project" value="UniProtKB-KW"/>
</dbReference>
<dbReference type="GO" id="GO:0000967">
    <property type="term" value="P:rRNA 5'-end processing"/>
    <property type="evidence" value="ECO:0007669"/>
    <property type="project" value="UniProtKB-UniRule"/>
</dbReference>
<dbReference type="CDD" id="cd16964">
    <property type="entry name" value="YqgF"/>
    <property type="match status" value="1"/>
</dbReference>
<dbReference type="FunFam" id="3.30.420.140:FF:000002">
    <property type="entry name" value="Putative pre-16S rRNA nuclease"/>
    <property type="match status" value="1"/>
</dbReference>
<dbReference type="Gene3D" id="3.30.420.140">
    <property type="entry name" value="YqgF/RNase H-like domain"/>
    <property type="match status" value="1"/>
</dbReference>
<dbReference type="HAMAP" id="MF_00651">
    <property type="entry name" value="Nuclease_YqgF"/>
    <property type="match status" value="1"/>
</dbReference>
<dbReference type="InterPro" id="IPR012337">
    <property type="entry name" value="RNaseH-like_sf"/>
</dbReference>
<dbReference type="InterPro" id="IPR005227">
    <property type="entry name" value="YqgF"/>
</dbReference>
<dbReference type="InterPro" id="IPR006641">
    <property type="entry name" value="YqgF/RNaseH-like_dom"/>
</dbReference>
<dbReference type="InterPro" id="IPR037027">
    <property type="entry name" value="YqgF/RNaseH-like_dom_sf"/>
</dbReference>
<dbReference type="NCBIfam" id="TIGR00250">
    <property type="entry name" value="RNAse_H_YqgF"/>
    <property type="match status" value="1"/>
</dbReference>
<dbReference type="PANTHER" id="PTHR33317">
    <property type="entry name" value="POLYNUCLEOTIDYL TRANSFERASE, RIBONUCLEASE H-LIKE SUPERFAMILY PROTEIN"/>
    <property type="match status" value="1"/>
</dbReference>
<dbReference type="PANTHER" id="PTHR33317:SF4">
    <property type="entry name" value="POLYNUCLEOTIDYL TRANSFERASE, RIBONUCLEASE H-LIKE SUPERFAMILY PROTEIN"/>
    <property type="match status" value="1"/>
</dbReference>
<dbReference type="Pfam" id="PF03652">
    <property type="entry name" value="RuvX"/>
    <property type="match status" value="1"/>
</dbReference>
<dbReference type="SMART" id="SM00732">
    <property type="entry name" value="YqgFc"/>
    <property type="match status" value="1"/>
</dbReference>
<dbReference type="SUPFAM" id="SSF53098">
    <property type="entry name" value="Ribonuclease H-like"/>
    <property type="match status" value="1"/>
</dbReference>
<sequence>MSRTVMAFDYGTKSIGSAIGQEITGTASPLKAFKANDGIPNWDEIEKQIKEWQPNLLIVGLPTDLHGKDLDTITPRAKKFAQRLHGRFGLPVELHDERLSTTEARAELFAMGGYKALSKGNVDCQSAVIILESWFESQWG</sequence>
<evidence type="ECO:0000255" key="1">
    <source>
        <dbReference type="HAMAP-Rule" id="MF_00651"/>
    </source>
</evidence>
<keyword id="KW-0963">Cytoplasm</keyword>
<keyword id="KW-0378">Hydrolase</keyword>
<keyword id="KW-0540">Nuclease</keyword>
<keyword id="KW-0690">Ribosome biogenesis</keyword>
<comment type="function">
    <text evidence="1">Could be a nuclease involved in processing of the 5'-end of pre-16S rRNA.</text>
</comment>
<comment type="subcellular location">
    <subcellularLocation>
        <location evidence="1">Cytoplasm</location>
    </subcellularLocation>
</comment>
<comment type="similarity">
    <text evidence="1">Belongs to the YqgF nuclease family.</text>
</comment>
<name>YQGF_VIBC3</name>
<reference key="1">
    <citation type="submission" date="2007-03" db="EMBL/GenBank/DDBJ databases">
        <authorList>
            <person name="Heidelberg J."/>
        </authorList>
    </citation>
    <scope>NUCLEOTIDE SEQUENCE [LARGE SCALE GENOMIC DNA]</scope>
    <source>
        <strain>ATCC 39541 / Classical Ogawa 395 / O395</strain>
    </source>
</reference>
<reference key="2">
    <citation type="journal article" date="2008" name="PLoS ONE">
        <title>A recalibrated molecular clock and independent origins for the cholera pandemic clones.</title>
        <authorList>
            <person name="Feng L."/>
            <person name="Reeves P.R."/>
            <person name="Lan R."/>
            <person name="Ren Y."/>
            <person name="Gao C."/>
            <person name="Zhou Z."/>
            <person name="Ren Y."/>
            <person name="Cheng J."/>
            <person name="Wang W."/>
            <person name="Wang J."/>
            <person name="Qian W."/>
            <person name="Li D."/>
            <person name="Wang L."/>
        </authorList>
    </citation>
    <scope>NUCLEOTIDE SEQUENCE [LARGE SCALE GENOMIC DNA]</scope>
    <source>
        <strain>ATCC 39541 / Classical Ogawa 395 / O395</strain>
    </source>
</reference>